<name>Y2723_GEOTN</name>
<feature type="chain" id="PRO_0000300607" description="UPF0354 protein GTNG_2723">
    <location>
        <begin position="1"/>
        <end position="265"/>
    </location>
</feature>
<comment type="similarity">
    <text evidence="1">Belongs to the UPF0354 family.</text>
</comment>
<reference key="1">
    <citation type="journal article" date="2007" name="Proc. Natl. Acad. Sci. U.S.A.">
        <title>Genome and proteome of long-chain alkane degrading Geobacillus thermodenitrificans NG80-2 isolated from a deep-subsurface oil reservoir.</title>
        <authorList>
            <person name="Feng L."/>
            <person name="Wang W."/>
            <person name="Cheng J."/>
            <person name="Ren Y."/>
            <person name="Zhao G."/>
            <person name="Gao C."/>
            <person name="Tang Y."/>
            <person name="Liu X."/>
            <person name="Han W."/>
            <person name="Peng X."/>
            <person name="Liu R."/>
            <person name="Wang L."/>
        </authorList>
    </citation>
    <scope>NUCLEOTIDE SEQUENCE [LARGE SCALE GENOMIC DNA]</scope>
    <source>
        <strain>NG80-2</strain>
    </source>
</reference>
<organism>
    <name type="scientific">Geobacillus thermodenitrificans (strain NG80-2)</name>
    <dbReference type="NCBI Taxonomy" id="420246"/>
    <lineage>
        <taxon>Bacteria</taxon>
        <taxon>Bacillati</taxon>
        <taxon>Bacillota</taxon>
        <taxon>Bacilli</taxon>
        <taxon>Bacillales</taxon>
        <taxon>Anoxybacillaceae</taxon>
        <taxon>Geobacillus</taxon>
    </lineage>
</organism>
<evidence type="ECO:0000255" key="1">
    <source>
        <dbReference type="HAMAP-Rule" id="MF_01548"/>
    </source>
</evidence>
<protein>
    <recommendedName>
        <fullName evidence="1">UPF0354 protein GTNG_2723</fullName>
    </recommendedName>
</protein>
<accession>A4IRW4</accession>
<gene>
    <name type="ordered locus">GTNG_2723</name>
</gene>
<proteinExistence type="inferred from homology"/>
<sequence length="265" mass="30931">MNSRQMYETIKERLNAHPHWTFHFDAKHDTMRIEDHRTKKGVTISLPGVIAKWHEQKDEAVREIIYYVEETLKTMEETATLSGNERNIYPVIRSTSFPTETKEGVPLLHDDHTAETRIYYALDLGKTYRLIDEQMMEKEKWNRERVKEIARFNVRSLPTPVKEDRVADNVFYFVNTNDGYDASRILNDAFLAEMHTRMEGTMAIAVPHQDVLILADLRNDIGYDVLAQMTMSFFANGRVPITALSFLYENGKLEPIFILGKKRRT</sequence>
<dbReference type="EMBL" id="CP000557">
    <property type="protein sequence ID" value="ABO68068.1"/>
    <property type="molecule type" value="Genomic_DNA"/>
</dbReference>
<dbReference type="RefSeq" id="WP_008880923.1">
    <property type="nucleotide sequence ID" value="NC_009328.1"/>
</dbReference>
<dbReference type="GeneID" id="87623135"/>
<dbReference type="KEGG" id="gtn:GTNG_2723"/>
<dbReference type="eggNOG" id="COG4848">
    <property type="taxonomic scope" value="Bacteria"/>
</dbReference>
<dbReference type="HOGENOM" id="CLU_085634_0_0_9"/>
<dbReference type="Proteomes" id="UP000001578">
    <property type="component" value="Chromosome"/>
</dbReference>
<dbReference type="HAMAP" id="MF_01548">
    <property type="entry name" value="UPF0354"/>
    <property type="match status" value="1"/>
</dbReference>
<dbReference type="InterPro" id="IPR010838">
    <property type="entry name" value="DUF1444"/>
</dbReference>
<dbReference type="NCBIfam" id="NF010189">
    <property type="entry name" value="PRK13668.1"/>
    <property type="match status" value="1"/>
</dbReference>
<dbReference type="Pfam" id="PF07285">
    <property type="entry name" value="DUF1444"/>
    <property type="match status" value="1"/>
</dbReference>
<dbReference type="PIRSF" id="PIRSF012562">
    <property type="entry name" value="UCP012562"/>
    <property type="match status" value="1"/>
</dbReference>